<dbReference type="EC" id="6.3.5.11" evidence="1"/>
<dbReference type="EMBL" id="AE017261">
    <property type="protein sequence ID" value="AAT42693.1"/>
    <property type="molecule type" value="Genomic_DNA"/>
</dbReference>
<dbReference type="RefSeq" id="WP_011176909.1">
    <property type="nucleotide sequence ID" value="NC_005877.1"/>
</dbReference>
<dbReference type="FunCoup" id="Q6L2V8">
    <property type="interactions" value="60"/>
</dbReference>
<dbReference type="STRING" id="263820.PTO0108"/>
<dbReference type="PaxDb" id="263820-PTO0108"/>
<dbReference type="GeneID" id="2844456"/>
<dbReference type="KEGG" id="pto:PTO0108"/>
<dbReference type="PATRIC" id="fig|263820.9.peg.122"/>
<dbReference type="eggNOG" id="arCOG00106">
    <property type="taxonomic scope" value="Archaea"/>
</dbReference>
<dbReference type="HOGENOM" id="CLU_022752_2_0_2"/>
<dbReference type="InParanoid" id="Q6L2V8"/>
<dbReference type="OrthoDB" id="8896at2157"/>
<dbReference type="UniPathway" id="UPA00148">
    <property type="reaction ID" value="UER00231"/>
</dbReference>
<dbReference type="Proteomes" id="UP000000438">
    <property type="component" value="Chromosome"/>
</dbReference>
<dbReference type="GO" id="GO:0005524">
    <property type="term" value="F:ATP binding"/>
    <property type="evidence" value="ECO:0007669"/>
    <property type="project" value="UniProtKB-UniRule"/>
</dbReference>
<dbReference type="GO" id="GO:0042242">
    <property type="term" value="F:cobyrinic acid a,c-diamide synthase activity"/>
    <property type="evidence" value="ECO:0007669"/>
    <property type="project" value="UniProtKB-UniRule"/>
</dbReference>
<dbReference type="GO" id="GO:0009236">
    <property type="term" value="P:cobalamin biosynthetic process"/>
    <property type="evidence" value="ECO:0007669"/>
    <property type="project" value="UniProtKB-UniRule"/>
</dbReference>
<dbReference type="CDD" id="cd05388">
    <property type="entry name" value="CobB_N"/>
    <property type="match status" value="1"/>
</dbReference>
<dbReference type="CDD" id="cd03130">
    <property type="entry name" value="GATase1_CobB"/>
    <property type="match status" value="1"/>
</dbReference>
<dbReference type="Gene3D" id="3.40.50.880">
    <property type="match status" value="1"/>
</dbReference>
<dbReference type="Gene3D" id="3.40.50.300">
    <property type="entry name" value="P-loop containing nucleotide triphosphate hydrolases"/>
    <property type="match status" value="1"/>
</dbReference>
<dbReference type="HAMAP" id="MF_00027">
    <property type="entry name" value="CobB_CbiA"/>
    <property type="match status" value="1"/>
</dbReference>
<dbReference type="InterPro" id="IPR004484">
    <property type="entry name" value="CbiA/CobB_synth"/>
</dbReference>
<dbReference type="InterPro" id="IPR029062">
    <property type="entry name" value="Class_I_gatase-like"/>
</dbReference>
<dbReference type="InterPro" id="IPR002586">
    <property type="entry name" value="CobQ/CobB/MinD/ParA_Nub-bd_dom"/>
</dbReference>
<dbReference type="InterPro" id="IPR011698">
    <property type="entry name" value="GATase_3"/>
</dbReference>
<dbReference type="InterPro" id="IPR027417">
    <property type="entry name" value="P-loop_NTPase"/>
</dbReference>
<dbReference type="NCBIfam" id="TIGR00379">
    <property type="entry name" value="cobB"/>
    <property type="match status" value="1"/>
</dbReference>
<dbReference type="NCBIfam" id="NF002204">
    <property type="entry name" value="PRK01077.1"/>
    <property type="match status" value="1"/>
</dbReference>
<dbReference type="PANTHER" id="PTHR43873">
    <property type="entry name" value="COBYRINATE A,C-DIAMIDE SYNTHASE"/>
    <property type="match status" value="1"/>
</dbReference>
<dbReference type="PANTHER" id="PTHR43873:SF1">
    <property type="entry name" value="COBYRINATE A,C-DIAMIDE SYNTHASE"/>
    <property type="match status" value="1"/>
</dbReference>
<dbReference type="Pfam" id="PF01656">
    <property type="entry name" value="CbiA"/>
    <property type="match status" value="1"/>
</dbReference>
<dbReference type="Pfam" id="PF07685">
    <property type="entry name" value="GATase_3"/>
    <property type="match status" value="1"/>
</dbReference>
<dbReference type="SUPFAM" id="SSF52317">
    <property type="entry name" value="Class I glutamine amidotransferase-like"/>
    <property type="match status" value="1"/>
</dbReference>
<dbReference type="SUPFAM" id="SSF52540">
    <property type="entry name" value="P-loop containing nucleoside triphosphate hydrolases"/>
    <property type="match status" value="1"/>
</dbReference>
<dbReference type="PROSITE" id="PS51274">
    <property type="entry name" value="GATASE_COBBQ"/>
    <property type="match status" value="1"/>
</dbReference>
<sequence length="440" mass="49267">MKINSIIIGAPSSSSGKTTISIGIMRALSRRLRVQPFKVGPDYIDPGYHNIATGRFSSNLDTWMSSREKMKEIFIKRSTGSDISIIEGVMGLYDGKQPDKDTGSTAEVARTLKSPVIIVIDISAMARTAAAIILGLIKMDKRLRISGVILNNAGSDYHCSIVRTAIEKYTGIPVIGCVKRSDDLKIDDRYLGLKTAMEDDNSGKIDKIADIIERSVDLDLLIKISKESGDISFKSGLFSKKNVNRVRIAIAYDAAFNFYYYDNIEMLKMYGAEIVYFSPLNDYKLPEADGLYIGGGFPELFAERLSDNYSIKKDIMEFFNSGRPVFAECGGYMYLSRGIKINGKYYEMASIINGESYMDSLILGYRNIRAESNNILMMGGWHVKGHEFHYSRLNVNANAYKTERGPDGISTKNLLAGYMHLYFPSNPRIPERFVRSCYNV</sequence>
<comment type="function">
    <text evidence="1">Catalyzes the ATP-dependent amidation of the two carboxylate groups at positions a and c of cobyrinate, using either L-glutamine or ammonia as the nitrogen source.</text>
</comment>
<comment type="catalytic activity">
    <reaction evidence="1">
        <text>cob(II)yrinate + 2 L-glutamine + 2 ATP + 2 H2O = cob(II)yrinate a,c diamide + 2 L-glutamate + 2 ADP + 2 phosphate + 2 H(+)</text>
        <dbReference type="Rhea" id="RHEA:26289"/>
        <dbReference type="ChEBI" id="CHEBI:15377"/>
        <dbReference type="ChEBI" id="CHEBI:15378"/>
        <dbReference type="ChEBI" id="CHEBI:29985"/>
        <dbReference type="ChEBI" id="CHEBI:30616"/>
        <dbReference type="ChEBI" id="CHEBI:43474"/>
        <dbReference type="ChEBI" id="CHEBI:58359"/>
        <dbReference type="ChEBI" id="CHEBI:58537"/>
        <dbReference type="ChEBI" id="CHEBI:58894"/>
        <dbReference type="ChEBI" id="CHEBI:456216"/>
        <dbReference type="EC" id="6.3.5.11"/>
    </reaction>
</comment>
<comment type="cofactor">
    <cofactor evidence="1">
        <name>Mg(2+)</name>
        <dbReference type="ChEBI" id="CHEBI:18420"/>
    </cofactor>
</comment>
<comment type="pathway">
    <text evidence="1">Cofactor biosynthesis; adenosylcobalamin biosynthesis; cob(II)yrinate a,c-diamide from sirohydrochlorin (anaerobic route): step 10/10.</text>
</comment>
<comment type="domain">
    <text evidence="1">Comprises of two domains. The C-terminal domain contains the binding site for glutamine and catalyzes the hydrolysis of this substrate to glutamate and ammonia. The N-terminal domain is anticipated to bind ATP and cobyrinate and catalyzes the ultimate synthesis of the diamide product. The ammonia produced via the glutaminase domain is probably translocated to the adjacent domain via a molecular tunnel, where it reacts with an activated intermediate.</text>
</comment>
<comment type="miscellaneous">
    <text evidence="1">The a and c carboxylates of cobyrinate are activated for nucleophilic attack via formation of a phosphorylated intermediate by ATP. CbiA catalyzes first the amidation of the c-carboxylate, and then that of the a-carboxylate.</text>
</comment>
<comment type="similarity">
    <text evidence="1">Belongs to the CobB/CbiA family.</text>
</comment>
<evidence type="ECO:0000255" key="1">
    <source>
        <dbReference type="HAMAP-Rule" id="MF_00027"/>
    </source>
</evidence>
<feature type="chain" id="PRO_0000141278" description="Cobyrinate a,c-diamide synthase">
    <location>
        <begin position="1"/>
        <end position="440"/>
    </location>
</feature>
<feature type="domain" description="GATase cobBQ-type" evidence="1">
    <location>
        <begin position="247"/>
        <end position="428"/>
    </location>
</feature>
<feature type="active site" description="Nucleophile" evidence="1">
    <location>
        <position position="329"/>
    </location>
</feature>
<feature type="site" description="Increases nucleophilicity of active site Cys" evidence="1">
    <location>
        <position position="420"/>
    </location>
</feature>
<protein>
    <recommendedName>
        <fullName evidence="1">Cobyrinate a,c-diamide synthase</fullName>
        <ecNumber evidence="1">6.3.5.11</ecNumber>
    </recommendedName>
    <alternativeName>
        <fullName evidence="1">Cobyrinic acid a,c-diamide synthetase</fullName>
    </alternativeName>
</protein>
<accession>Q6L2V8</accession>
<gene>
    <name evidence="1" type="primary">cbiA</name>
    <name type="ordered locus">PTO0108</name>
</gene>
<name>CBIA_PICTO</name>
<proteinExistence type="inferred from homology"/>
<reference key="1">
    <citation type="journal article" date="2004" name="Proc. Natl. Acad. Sci. U.S.A.">
        <title>Genome sequence of Picrophilus torridus and its implications for life around pH 0.</title>
        <authorList>
            <person name="Fuetterer O."/>
            <person name="Angelov A."/>
            <person name="Liesegang H."/>
            <person name="Gottschalk G."/>
            <person name="Schleper C."/>
            <person name="Schepers B."/>
            <person name="Dock C."/>
            <person name="Antranikian G."/>
            <person name="Liebl W."/>
        </authorList>
    </citation>
    <scope>NUCLEOTIDE SEQUENCE [LARGE SCALE GENOMIC DNA]</scope>
    <source>
        <strain>ATCC 700027 / DSM 9790 / JCM 10055 / NBRC 100828 / KAW 2/3</strain>
    </source>
</reference>
<organism>
    <name type="scientific">Picrophilus torridus (strain ATCC 700027 / DSM 9790 / JCM 10055 / NBRC 100828 / KAW 2/3)</name>
    <dbReference type="NCBI Taxonomy" id="1122961"/>
    <lineage>
        <taxon>Archaea</taxon>
        <taxon>Methanobacteriati</taxon>
        <taxon>Thermoplasmatota</taxon>
        <taxon>Thermoplasmata</taxon>
        <taxon>Thermoplasmatales</taxon>
        <taxon>Picrophilaceae</taxon>
        <taxon>Picrophilus</taxon>
    </lineage>
</organism>
<keyword id="KW-0067">ATP-binding</keyword>
<keyword id="KW-0169">Cobalamin biosynthesis</keyword>
<keyword id="KW-0315">Glutamine amidotransferase</keyword>
<keyword id="KW-0436">Ligase</keyword>
<keyword id="KW-0460">Magnesium</keyword>
<keyword id="KW-0547">Nucleotide-binding</keyword>